<dbReference type="EMBL" id="CP009812">
    <property type="protein sequence ID" value="ATZ52590.1"/>
    <property type="molecule type" value="Genomic_DNA"/>
</dbReference>
<dbReference type="RefSeq" id="XP_001551972.1">
    <property type="nucleotide sequence ID" value="XM_001551922.1"/>
</dbReference>
<dbReference type="EnsemblFungi" id="Bcin08g02590.1">
    <property type="protein sequence ID" value="Bcin08p02590.1"/>
    <property type="gene ID" value="Bcin08g02590"/>
</dbReference>
<dbReference type="GeneID" id="5432488"/>
<dbReference type="KEGG" id="bfu:BCIN_08g02590"/>
<dbReference type="VEuPathDB" id="FungiDB:Bcin08g02590"/>
<dbReference type="OMA" id="AEVWELV"/>
<dbReference type="OrthoDB" id="10045710at2759"/>
<dbReference type="Proteomes" id="UP000001798">
    <property type="component" value="Chromosome bcin08"/>
</dbReference>
<dbReference type="GO" id="GO:0006629">
    <property type="term" value="P:lipid metabolic process"/>
    <property type="evidence" value="ECO:0007669"/>
    <property type="project" value="UniProtKB-KW"/>
</dbReference>
<dbReference type="Gene3D" id="1.10.238.10">
    <property type="entry name" value="EF-hand"/>
    <property type="match status" value="1"/>
</dbReference>
<dbReference type="InterPro" id="IPR011992">
    <property type="entry name" value="EF-hand-dom_pair"/>
</dbReference>
<dbReference type="InterPro" id="IPR000261">
    <property type="entry name" value="EH_dom"/>
</dbReference>
<dbReference type="SMART" id="SM00027">
    <property type="entry name" value="EH"/>
    <property type="match status" value="1"/>
</dbReference>
<dbReference type="SUPFAM" id="SSF47473">
    <property type="entry name" value="EF-hand"/>
    <property type="match status" value="1"/>
</dbReference>
<proteinExistence type="inferred from homology"/>
<protein>
    <recommendedName>
        <fullName>Increased rDNA silencing protein 4</fullName>
    </recommendedName>
</protein>
<organism>
    <name type="scientific">Botryotinia fuckeliana (strain B05.10)</name>
    <name type="common">Noble rot fungus</name>
    <name type="synonym">Botrytis cinerea</name>
    <dbReference type="NCBI Taxonomy" id="332648"/>
    <lineage>
        <taxon>Eukaryota</taxon>
        <taxon>Fungi</taxon>
        <taxon>Dikarya</taxon>
        <taxon>Ascomycota</taxon>
        <taxon>Pezizomycotina</taxon>
        <taxon>Leotiomycetes</taxon>
        <taxon>Helotiales</taxon>
        <taxon>Sclerotiniaceae</taxon>
        <taxon>Botrytis</taxon>
    </lineage>
</organism>
<feature type="chain" id="PRO_0000308751" description="Increased rDNA silencing protein 4">
    <location>
        <begin position="1"/>
        <end position="885"/>
    </location>
</feature>
<feature type="domain" description="EH">
    <location>
        <begin position="773"/>
        <end position="879"/>
    </location>
</feature>
<feature type="region of interest" description="Disordered" evidence="2">
    <location>
        <begin position="1"/>
        <end position="98"/>
    </location>
</feature>
<feature type="region of interest" description="Disordered" evidence="2">
    <location>
        <begin position="154"/>
        <end position="246"/>
    </location>
</feature>
<feature type="region of interest" description="Disordered" evidence="2">
    <location>
        <begin position="262"/>
        <end position="652"/>
    </location>
</feature>
<feature type="region of interest" description="Disordered" evidence="2">
    <location>
        <begin position="671"/>
        <end position="694"/>
    </location>
</feature>
<feature type="region of interest" description="Disordered" evidence="2">
    <location>
        <begin position="723"/>
        <end position="762"/>
    </location>
</feature>
<feature type="compositionally biased region" description="Polar residues" evidence="2">
    <location>
        <begin position="9"/>
        <end position="32"/>
    </location>
</feature>
<feature type="compositionally biased region" description="Low complexity" evidence="2">
    <location>
        <begin position="33"/>
        <end position="68"/>
    </location>
</feature>
<feature type="compositionally biased region" description="Polar residues" evidence="2">
    <location>
        <begin position="69"/>
        <end position="83"/>
    </location>
</feature>
<feature type="compositionally biased region" description="Low complexity" evidence="2">
    <location>
        <begin position="84"/>
        <end position="95"/>
    </location>
</feature>
<feature type="compositionally biased region" description="Gly residues" evidence="2">
    <location>
        <begin position="156"/>
        <end position="168"/>
    </location>
</feature>
<feature type="compositionally biased region" description="Polar residues" evidence="2">
    <location>
        <begin position="293"/>
        <end position="302"/>
    </location>
</feature>
<feature type="compositionally biased region" description="Basic and acidic residues" evidence="2">
    <location>
        <begin position="325"/>
        <end position="335"/>
    </location>
</feature>
<feature type="compositionally biased region" description="Polar residues" evidence="2">
    <location>
        <begin position="339"/>
        <end position="348"/>
    </location>
</feature>
<feature type="compositionally biased region" description="Low complexity" evidence="2">
    <location>
        <begin position="373"/>
        <end position="383"/>
    </location>
</feature>
<feature type="compositionally biased region" description="Low complexity" evidence="2">
    <location>
        <begin position="414"/>
        <end position="425"/>
    </location>
</feature>
<feature type="compositionally biased region" description="Polar residues" evidence="2">
    <location>
        <begin position="469"/>
        <end position="478"/>
    </location>
</feature>
<feature type="compositionally biased region" description="Low complexity" evidence="2">
    <location>
        <begin position="505"/>
        <end position="517"/>
    </location>
</feature>
<feature type="compositionally biased region" description="Polar residues" evidence="2">
    <location>
        <begin position="534"/>
        <end position="546"/>
    </location>
</feature>
<feature type="compositionally biased region" description="Low complexity" evidence="2">
    <location>
        <begin position="573"/>
        <end position="585"/>
    </location>
</feature>
<feature type="compositionally biased region" description="Low complexity" evidence="2">
    <location>
        <begin position="618"/>
        <end position="633"/>
    </location>
</feature>
<feature type="compositionally biased region" description="Basic residues" evidence="2">
    <location>
        <begin position="743"/>
        <end position="755"/>
    </location>
</feature>
<sequence>MADAHSDGRTGSTTPGKITRPETTGTKNTHSDNASTSAPGNSASASASASASASTSTLHSNSSTTTSSPQRMINHNPSTSSLRNINTGGTRIETGTGRGTGAVQNAALTGAALAFSNAMGKATPVVPNKFAGKTQLGGNGLGGKDGALAAATKVRVGGGGSPNNGGGRTRSPSKVSVTDPGMGGEQQIYGYQKVGRERTGESETDGGSVISGGLEYQGGQRIPQKRNQRPNGHLLPPFSGTSETSPNVKNNSAAFMAANLAAKRSRENSPSHTGQNYGMGMGMGKQASPLPSRRQSYASSIDSTDRRVDLSSIPPTSNLVEMWEQPDKGVKKERGLVSNRGNEIVNRQVQKRPVSSHAPIPVLKPAGLTRPVSSHASESSVQSRIASSQAPISEQVKSKPKPVIHPRPSSSQASVPGPSKPVSKPDVQPPPVSSHTTSSEAPKPSPKPPVQKPAIYNTRPASSHGPVPNLSTKPSIQKLSRPVSSHGPPPAKPSAKPSLQSIRPTSSHTLESTESSSKASVQKPSLPPPRRTPANLSVSGDQSTSLPMHAPQPRSMQSPILTTADRTEPASESPTQSPRSSSTTKTPRRSSKPTLPSRPPVSRQSYNNDADDDESSDDSFVSASSQPKPKSPSFRAKIAEQKRLQTSTYAPSMTAKTLSNAMVAGYLASSRASTPSISPGVIQPPAPPPPRRLKKFFHSEHSRTPTPPQNTLSATGVPTMKTTMRKPKTEKELKEEEGEGEKRRAKKHLVKKHPNKHDEGNRKRWRDEITEKERKRYEALWASNKGLFPYTMDPRGEIIEIEGAADTVPGMVVKDLWERSRLGGDVLEEVWELVHGKGYWGRQKQKRFGRLERDEFVVGLWLIDQRLKGRKLPARVNHSLWASAS</sequence>
<evidence type="ECO:0000250" key="1"/>
<evidence type="ECO:0000256" key="2">
    <source>
        <dbReference type="SAM" id="MobiDB-lite"/>
    </source>
</evidence>
<evidence type="ECO:0000305" key="3"/>
<accession>A6S9V4</accession>
<accession>A0A384JPZ5</accession>
<comment type="function">
    <text evidence="1">Positive regulator of phosphatidylinositol 4,5-bisphosphate turnover and negatively regulates signaling through the cell integrity pathway. Involved in rDNA silencing (By similarity).</text>
</comment>
<comment type="similarity">
    <text evidence="3">Belongs to the IRS4 family.</text>
</comment>
<gene>
    <name type="primary">irs4</name>
    <name type="ORF">BC1G_09584</name>
    <name type="ORF">BCIN_08g02590</name>
</gene>
<reference key="1">
    <citation type="journal article" date="2011" name="PLoS Genet.">
        <title>Genomic analysis of the necrotrophic fungal pathogens Sclerotinia sclerotiorum and Botrytis cinerea.</title>
        <authorList>
            <person name="Amselem J."/>
            <person name="Cuomo C.A."/>
            <person name="van Kan J.A.L."/>
            <person name="Viaud M."/>
            <person name="Benito E.P."/>
            <person name="Couloux A."/>
            <person name="Coutinho P.M."/>
            <person name="de Vries R.P."/>
            <person name="Dyer P.S."/>
            <person name="Fillinger S."/>
            <person name="Fournier E."/>
            <person name="Gout L."/>
            <person name="Hahn M."/>
            <person name="Kohn L."/>
            <person name="Lapalu N."/>
            <person name="Plummer K.M."/>
            <person name="Pradier J.-M."/>
            <person name="Quevillon E."/>
            <person name="Sharon A."/>
            <person name="Simon A."/>
            <person name="ten Have A."/>
            <person name="Tudzynski B."/>
            <person name="Tudzynski P."/>
            <person name="Wincker P."/>
            <person name="Andrew M."/>
            <person name="Anthouard V."/>
            <person name="Beever R.E."/>
            <person name="Beffa R."/>
            <person name="Benoit I."/>
            <person name="Bouzid O."/>
            <person name="Brault B."/>
            <person name="Chen Z."/>
            <person name="Choquer M."/>
            <person name="Collemare J."/>
            <person name="Cotton P."/>
            <person name="Danchin E.G."/>
            <person name="Da Silva C."/>
            <person name="Gautier A."/>
            <person name="Giraud C."/>
            <person name="Giraud T."/>
            <person name="Gonzalez C."/>
            <person name="Grossetete S."/>
            <person name="Gueldener U."/>
            <person name="Henrissat B."/>
            <person name="Howlett B.J."/>
            <person name="Kodira C."/>
            <person name="Kretschmer M."/>
            <person name="Lappartient A."/>
            <person name="Leroch M."/>
            <person name="Levis C."/>
            <person name="Mauceli E."/>
            <person name="Neuveglise C."/>
            <person name="Oeser B."/>
            <person name="Pearson M."/>
            <person name="Poulain J."/>
            <person name="Poussereau N."/>
            <person name="Quesneville H."/>
            <person name="Rascle C."/>
            <person name="Schumacher J."/>
            <person name="Segurens B."/>
            <person name="Sexton A."/>
            <person name="Silva E."/>
            <person name="Sirven C."/>
            <person name="Soanes D.M."/>
            <person name="Talbot N.J."/>
            <person name="Templeton M."/>
            <person name="Yandava C."/>
            <person name="Yarden O."/>
            <person name="Zeng Q."/>
            <person name="Rollins J.A."/>
            <person name="Lebrun M.-H."/>
            <person name="Dickman M."/>
        </authorList>
    </citation>
    <scope>NUCLEOTIDE SEQUENCE [LARGE SCALE GENOMIC DNA]</scope>
    <source>
        <strain>B05.10</strain>
    </source>
</reference>
<reference key="2">
    <citation type="journal article" date="2012" name="Eukaryot. Cell">
        <title>Genome update of Botrytis cinerea strains B05.10 and T4.</title>
        <authorList>
            <person name="Staats M."/>
            <person name="van Kan J.A.L."/>
        </authorList>
    </citation>
    <scope>NUCLEOTIDE SEQUENCE [LARGE SCALE GENOMIC DNA]</scope>
    <scope>GENOME REANNOTATION</scope>
    <source>
        <strain>B05.10</strain>
    </source>
</reference>
<reference key="3">
    <citation type="journal article" date="2017" name="Mol. Plant Pathol.">
        <title>A gapless genome sequence of the fungus Botrytis cinerea.</title>
        <authorList>
            <person name="van Kan J.A.L."/>
            <person name="Stassen J.H.M."/>
            <person name="Mosbach A."/>
            <person name="van der Lee T.A.J."/>
            <person name="Faino L."/>
            <person name="Farmer A.D."/>
            <person name="Papasotiriou D.G."/>
            <person name="Zhou S."/>
            <person name="Seidl M.F."/>
            <person name="Cottam E."/>
            <person name="Edel D."/>
            <person name="Hahn M."/>
            <person name="Schwartz D.C."/>
            <person name="Dietrich R.A."/>
            <person name="Widdison S."/>
            <person name="Scalliet G."/>
        </authorList>
    </citation>
    <scope>NUCLEOTIDE SEQUENCE [LARGE SCALE GENOMIC DNA]</scope>
    <scope>GENOME REANNOTATION</scope>
    <source>
        <strain>B05.10</strain>
    </source>
</reference>
<name>IRS4_BOTFB</name>
<keyword id="KW-0443">Lipid metabolism</keyword>
<keyword id="KW-1185">Reference proteome</keyword>